<name>EXP27_ORYSJ</name>
<accession>Q7XE35</accession>
<accession>A0A0P0XUK6</accession>
<protein>
    <recommendedName>
        <fullName>Putative expansin-A27</fullName>
    </recommendedName>
    <alternativeName>
        <fullName>Alpha-expansin-27</fullName>
    </alternativeName>
    <alternativeName>
        <fullName>OsEXP27</fullName>
    </alternativeName>
    <alternativeName>
        <fullName>OsEXPA27</fullName>
    </alternativeName>
    <alternativeName>
        <fullName>OsaEXPa1.4</fullName>
    </alternativeName>
</protein>
<sequence length="255" mass="27090">MGAMAENLLVLCTILAARMALAAADDWIPATATFYGGNDGSGTMGGACGYGNLYDQGYGLENAALSTALFNDGAACGQCYLIVCDTDKAGRWCKPRGAVTVTATNLCPPNWALPSDGGGWCNPPRRHFDMSQPAWERIGVYRAGIVPVLYRRVRCWRRGGVRFTVGGFDHFELVLVANVAGSGSVAAVSVRGAGTGWLQMSRNWGANWQSLAGLAGQPLSFGVTTTGGQYILFQDVAPAGWKFGQTFSTSKQFDY</sequence>
<evidence type="ECO:0000250" key="1"/>
<evidence type="ECO:0000255" key="2"/>
<evidence type="ECO:0000255" key="3">
    <source>
        <dbReference type="PROSITE-ProRule" id="PRU00078"/>
    </source>
</evidence>
<evidence type="ECO:0000255" key="4">
    <source>
        <dbReference type="PROSITE-ProRule" id="PRU00079"/>
    </source>
</evidence>
<evidence type="ECO:0000305" key="5"/>
<comment type="function">
    <text evidence="1">May cause loosening and extension of plant cell walls by disrupting non-covalent bonding between cellulose microfibrils and matrix glucans. No enzymatic activity has been found. May be required for rapid internodal elongation in deepwater rice during submergence (By similarity).</text>
</comment>
<comment type="subcellular location">
    <subcellularLocation>
        <location evidence="1">Secreted</location>
        <location evidence="1">Cell wall</location>
    </subcellularLocation>
    <subcellularLocation>
        <location evidence="1">Membrane</location>
        <topology evidence="1">Peripheral membrane protein</topology>
    </subcellularLocation>
</comment>
<comment type="similarity">
    <text evidence="5">Belongs to the expansin family. Expansin A subfamily.</text>
</comment>
<comment type="sequence caution" evidence="5">
    <conflict type="erroneous initiation">
        <sequence resource="EMBL-CDS" id="AAP53955"/>
    </conflict>
</comment>
<comment type="online information" name="EXPANSIN homepage">
    <link uri="https://www.dept.psu.edu/biology/groups/expansins/index.htm"/>
</comment>
<reference key="1">
    <citation type="journal article" date="2003" name="Science">
        <title>In-depth view of structure, activity, and evolution of rice chromosome 10.</title>
        <authorList>
            <person name="Yu Y."/>
            <person name="Rambo T."/>
            <person name="Currie J."/>
            <person name="Saski C."/>
            <person name="Kim H.-R."/>
            <person name="Collura K."/>
            <person name="Thompson S."/>
            <person name="Simmons J."/>
            <person name="Yang T.-J."/>
            <person name="Nah G."/>
            <person name="Patel A.J."/>
            <person name="Thurmond S."/>
            <person name="Henry D."/>
            <person name="Oates R."/>
            <person name="Palmer M."/>
            <person name="Pries G."/>
            <person name="Gibson J."/>
            <person name="Anderson H."/>
            <person name="Paradkar M."/>
            <person name="Crane L."/>
            <person name="Dale J."/>
            <person name="Carver M.B."/>
            <person name="Wood T."/>
            <person name="Frisch D."/>
            <person name="Engler F."/>
            <person name="Soderlund C."/>
            <person name="Palmer L.E."/>
            <person name="Teytelman L."/>
            <person name="Nascimento L."/>
            <person name="De la Bastide M."/>
            <person name="Spiegel L."/>
            <person name="Ware D."/>
            <person name="O'Shaughnessy A."/>
            <person name="Dike S."/>
            <person name="Dedhia N."/>
            <person name="Preston R."/>
            <person name="Huang E."/>
            <person name="Ferraro K."/>
            <person name="Kuit K."/>
            <person name="Miller B."/>
            <person name="Zutavern T."/>
            <person name="Katzenberger F."/>
            <person name="Muller S."/>
            <person name="Balija V."/>
            <person name="Martienssen R.A."/>
            <person name="Stein L."/>
            <person name="Minx P."/>
            <person name="Johnson D."/>
            <person name="Cordum H."/>
            <person name="Mardis E."/>
            <person name="Cheng Z."/>
            <person name="Jiang J."/>
            <person name="Wilson R."/>
            <person name="McCombie W.R."/>
            <person name="Wing R.A."/>
            <person name="Yuan Q."/>
            <person name="Ouyang S."/>
            <person name="Liu J."/>
            <person name="Jones K.M."/>
            <person name="Gansberger K."/>
            <person name="Moffat K."/>
            <person name="Hill J."/>
            <person name="Tsitrin T."/>
            <person name="Overton L."/>
            <person name="Bera J."/>
            <person name="Kim M."/>
            <person name="Jin S."/>
            <person name="Tallon L."/>
            <person name="Ciecko A."/>
            <person name="Pai G."/>
            <person name="Van Aken S."/>
            <person name="Utterback T."/>
            <person name="Reidmuller S."/>
            <person name="Bormann J."/>
            <person name="Feldblyum T."/>
            <person name="Hsiao J."/>
            <person name="Zismann V."/>
            <person name="Blunt S."/>
            <person name="de Vazeille A.R."/>
            <person name="Shaffer T."/>
            <person name="Koo H."/>
            <person name="Suh B."/>
            <person name="Yang Q."/>
            <person name="Haas B."/>
            <person name="Peterson J."/>
            <person name="Pertea M."/>
            <person name="Volfovsky N."/>
            <person name="Wortman J."/>
            <person name="White O."/>
            <person name="Salzberg S.L."/>
            <person name="Fraser C.M."/>
            <person name="Buell C.R."/>
            <person name="Messing J."/>
            <person name="Song R."/>
            <person name="Fuks G."/>
            <person name="Llaca V."/>
            <person name="Kovchak S."/>
            <person name="Young S."/>
            <person name="Bowers J.E."/>
            <person name="Paterson A.H."/>
            <person name="Johns M.A."/>
            <person name="Mao L."/>
            <person name="Pan H."/>
            <person name="Dean R.A."/>
        </authorList>
    </citation>
    <scope>NUCLEOTIDE SEQUENCE [LARGE SCALE GENOMIC DNA]</scope>
    <source>
        <strain>cv. Nipponbare</strain>
    </source>
</reference>
<reference key="2">
    <citation type="journal article" date="2005" name="Nature">
        <title>The map-based sequence of the rice genome.</title>
        <authorList>
            <consortium name="International rice genome sequencing project (IRGSP)"/>
        </authorList>
    </citation>
    <scope>NUCLEOTIDE SEQUENCE [LARGE SCALE GENOMIC DNA]</scope>
    <source>
        <strain>cv. Nipponbare</strain>
    </source>
</reference>
<reference key="3">
    <citation type="journal article" date="2008" name="Nucleic Acids Res.">
        <title>The rice annotation project database (RAP-DB): 2008 update.</title>
        <authorList>
            <consortium name="The rice annotation project (RAP)"/>
        </authorList>
    </citation>
    <scope>GENOME REANNOTATION</scope>
    <source>
        <strain>cv. Nipponbare</strain>
    </source>
</reference>
<reference key="4">
    <citation type="journal article" date="2013" name="Rice">
        <title>Improvement of the Oryza sativa Nipponbare reference genome using next generation sequence and optical map data.</title>
        <authorList>
            <person name="Kawahara Y."/>
            <person name="de la Bastide M."/>
            <person name="Hamilton J.P."/>
            <person name="Kanamori H."/>
            <person name="McCombie W.R."/>
            <person name="Ouyang S."/>
            <person name="Schwartz D.C."/>
            <person name="Tanaka T."/>
            <person name="Wu J."/>
            <person name="Zhou S."/>
            <person name="Childs K.L."/>
            <person name="Davidson R.M."/>
            <person name="Lin H."/>
            <person name="Quesada-Ocampo L."/>
            <person name="Vaillancourt B."/>
            <person name="Sakai H."/>
            <person name="Lee S.S."/>
            <person name="Kim J."/>
            <person name="Numa H."/>
            <person name="Itoh T."/>
            <person name="Buell C.R."/>
            <person name="Matsumoto T."/>
        </authorList>
    </citation>
    <scope>GENOME REANNOTATION</scope>
    <source>
        <strain>cv. Nipponbare</strain>
    </source>
</reference>
<reference key="5">
    <citation type="journal article" date="2004" name="Plant Mol. Biol.">
        <title>Nomenclature for members of the expansin superfamily of genes and proteins.</title>
        <authorList>
            <person name="Kende H."/>
            <person name="Bradford K.J."/>
            <person name="Brummell D.A."/>
            <person name="Cho H.-T."/>
            <person name="Cosgrove D.J."/>
            <person name="Fleming A.J."/>
            <person name="Gehring C."/>
            <person name="Lee Y."/>
            <person name="McQueen-Mason S.J."/>
            <person name="Rose J.K.C."/>
            <person name="Voesenek L.A.C."/>
        </authorList>
    </citation>
    <scope>NOMENCLATURE</scope>
</reference>
<dbReference type="EMBL" id="DP000086">
    <property type="protein sequence ID" value="AAP53955.1"/>
    <property type="status" value="ALT_INIT"/>
    <property type="molecule type" value="Genomic_DNA"/>
</dbReference>
<dbReference type="EMBL" id="AP008216">
    <property type="status" value="NOT_ANNOTATED_CDS"/>
    <property type="molecule type" value="Genomic_DNA"/>
</dbReference>
<dbReference type="EMBL" id="AP014966">
    <property type="protein sequence ID" value="BAT11021.1"/>
    <property type="molecule type" value="Genomic_DNA"/>
</dbReference>
<dbReference type="SMR" id="Q7XE35"/>
<dbReference type="FunCoup" id="Q7XE35">
    <property type="interactions" value="11"/>
</dbReference>
<dbReference type="STRING" id="39947.Q7XE35"/>
<dbReference type="PaxDb" id="39947-Q7XE35"/>
<dbReference type="EnsemblPlants" id="Os10t0439100-00">
    <property type="protein sequence ID" value="Os10t0439100-00"/>
    <property type="gene ID" value="Os10g0439100"/>
</dbReference>
<dbReference type="GeneID" id="107276948"/>
<dbReference type="Gramene" id="Os10t0439100-00">
    <property type="protein sequence ID" value="Os10t0439100-00"/>
    <property type="gene ID" value="Os10g0439100"/>
</dbReference>
<dbReference type="KEGG" id="osa:107276948"/>
<dbReference type="eggNOG" id="ENOG502QVVV">
    <property type="taxonomic scope" value="Eukaryota"/>
</dbReference>
<dbReference type="HOGENOM" id="CLU_027462_0_3_1"/>
<dbReference type="InParanoid" id="Q7XE35"/>
<dbReference type="OMA" id="MIMCDAS"/>
<dbReference type="OrthoDB" id="10294214at2759"/>
<dbReference type="Proteomes" id="UP000000763">
    <property type="component" value="Chromosome 10"/>
</dbReference>
<dbReference type="Proteomes" id="UP000059680">
    <property type="component" value="Chromosome 10"/>
</dbReference>
<dbReference type="GO" id="GO:0005576">
    <property type="term" value="C:extracellular region"/>
    <property type="evidence" value="ECO:0007669"/>
    <property type="project" value="UniProtKB-KW"/>
</dbReference>
<dbReference type="GO" id="GO:0016020">
    <property type="term" value="C:membrane"/>
    <property type="evidence" value="ECO:0007669"/>
    <property type="project" value="UniProtKB-SubCell"/>
</dbReference>
<dbReference type="GO" id="GO:0009828">
    <property type="term" value="P:plant-type cell wall loosening"/>
    <property type="evidence" value="ECO:0000250"/>
    <property type="project" value="UniProtKB"/>
</dbReference>
<dbReference type="CDD" id="cd22274">
    <property type="entry name" value="DPBB_EXPA_N"/>
    <property type="match status" value="1"/>
</dbReference>
<dbReference type="Gene3D" id="2.60.40.760">
    <property type="entry name" value="Expansin, cellulose-binding-like domain"/>
    <property type="match status" value="1"/>
</dbReference>
<dbReference type="Gene3D" id="2.40.40.10">
    <property type="entry name" value="RlpA-like domain"/>
    <property type="match status" value="1"/>
</dbReference>
<dbReference type="InterPro" id="IPR007118">
    <property type="entry name" value="Expan_Lol_pI"/>
</dbReference>
<dbReference type="InterPro" id="IPR002963">
    <property type="entry name" value="Expansin"/>
</dbReference>
<dbReference type="InterPro" id="IPR007112">
    <property type="entry name" value="Expansin/allergen_DPBB_dom"/>
</dbReference>
<dbReference type="InterPro" id="IPR007117">
    <property type="entry name" value="Expansin_CBD"/>
</dbReference>
<dbReference type="InterPro" id="IPR036749">
    <property type="entry name" value="Expansin_CBD_sf"/>
</dbReference>
<dbReference type="InterPro" id="IPR009009">
    <property type="entry name" value="RlpA-like_DPBB"/>
</dbReference>
<dbReference type="InterPro" id="IPR036908">
    <property type="entry name" value="RlpA-like_sf"/>
</dbReference>
<dbReference type="PANTHER" id="PTHR31867">
    <property type="entry name" value="EXPANSIN-A15"/>
    <property type="match status" value="1"/>
</dbReference>
<dbReference type="Pfam" id="PF03330">
    <property type="entry name" value="DPBB_1"/>
    <property type="match status" value="1"/>
</dbReference>
<dbReference type="Pfam" id="PF01357">
    <property type="entry name" value="Expansin_C"/>
    <property type="match status" value="1"/>
</dbReference>
<dbReference type="PRINTS" id="PR01226">
    <property type="entry name" value="EXPANSIN"/>
</dbReference>
<dbReference type="PRINTS" id="PR01225">
    <property type="entry name" value="EXPANSNFAMLY"/>
</dbReference>
<dbReference type="SMART" id="SM00837">
    <property type="entry name" value="DPBB_1"/>
    <property type="match status" value="1"/>
</dbReference>
<dbReference type="SUPFAM" id="SSF50685">
    <property type="entry name" value="Barwin-like endoglucanases"/>
    <property type="match status" value="1"/>
</dbReference>
<dbReference type="SUPFAM" id="SSF49590">
    <property type="entry name" value="PHL pollen allergen"/>
    <property type="match status" value="1"/>
</dbReference>
<dbReference type="PROSITE" id="PS50843">
    <property type="entry name" value="EXPANSIN_CBD"/>
    <property type="match status" value="1"/>
</dbReference>
<dbReference type="PROSITE" id="PS50842">
    <property type="entry name" value="EXPANSIN_EG45"/>
    <property type="match status" value="1"/>
</dbReference>
<proteinExistence type="inferred from homology"/>
<gene>
    <name type="primary">EXPA27</name>
    <name type="synonym">EXP27</name>
    <name type="ordered locus">Os10g0439100</name>
    <name type="ordered locus">LOC_Os10g30330</name>
</gene>
<organism>
    <name type="scientific">Oryza sativa subsp. japonica</name>
    <name type="common">Rice</name>
    <dbReference type="NCBI Taxonomy" id="39947"/>
    <lineage>
        <taxon>Eukaryota</taxon>
        <taxon>Viridiplantae</taxon>
        <taxon>Streptophyta</taxon>
        <taxon>Embryophyta</taxon>
        <taxon>Tracheophyta</taxon>
        <taxon>Spermatophyta</taxon>
        <taxon>Magnoliopsida</taxon>
        <taxon>Liliopsida</taxon>
        <taxon>Poales</taxon>
        <taxon>Poaceae</taxon>
        <taxon>BOP clade</taxon>
        <taxon>Oryzoideae</taxon>
        <taxon>Oryzeae</taxon>
        <taxon>Oryzinae</taxon>
        <taxon>Oryza</taxon>
        <taxon>Oryza sativa</taxon>
    </lineage>
</organism>
<keyword id="KW-0134">Cell wall</keyword>
<keyword id="KW-0961">Cell wall biogenesis/degradation</keyword>
<keyword id="KW-0472">Membrane</keyword>
<keyword id="KW-1185">Reference proteome</keyword>
<keyword id="KW-0964">Secreted</keyword>
<keyword id="KW-0732">Signal</keyword>
<feature type="signal peptide" evidence="2">
    <location>
        <begin position="1"/>
        <end position="24"/>
    </location>
</feature>
<feature type="chain" id="PRO_0000252006" description="Putative expansin-A27">
    <location>
        <begin position="25"/>
        <end position="255"/>
    </location>
</feature>
<feature type="domain" description="Expansin-like EG45" evidence="4">
    <location>
        <begin position="45"/>
        <end position="160"/>
    </location>
</feature>
<feature type="domain" description="Expansin-like CBD" evidence="3">
    <location>
        <begin position="170"/>
        <end position="249"/>
    </location>
</feature>